<feature type="chain" id="PRO_0000140186" description="GMP synthase [glutamine-hydrolyzing]">
    <location>
        <begin position="1"/>
        <end position="526"/>
    </location>
</feature>
<feature type="domain" description="Glutamine amidotransferase type-1">
    <location>
        <begin position="13"/>
        <end position="204"/>
    </location>
</feature>
<feature type="domain" description="GMPS ATP-PPase">
    <location>
        <begin position="205"/>
        <end position="400"/>
    </location>
</feature>
<feature type="active site" description="Nucleophile" evidence="1">
    <location>
        <position position="90"/>
    </location>
</feature>
<feature type="active site" evidence="1">
    <location>
        <position position="178"/>
    </location>
</feature>
<feature type="active site" evidence="1">
    <location>
        <position position="180"/>
    </location>
</feature>
<feature type="binding site" evidence="1">
    <location>
        <begin position="232"/>
        <end position="238"/>
    </location>
    <ligand>
        <name>ATP</name>
        <dbReference type="ChEBI" id="CHEBI:30616"/>
    </ligand>
</feature>
<sequence>MSSATPAAAAPDTVLVVDFGAQYAQLIARRVREARVYSEIVPSSMPVEEILAKNPAAIILSGGPSSVYEAGAPTLDRSLFEAGVPVFGMCYGFQLMAQTLGGTVDNSGAREYGRTELAVSKPSSTLFEGTPAEQSVWMSHGDACSAAPEGFTVTGSTDVVPVAAFENDEKKLYGVQYHPEVMHSTHGQQVLEHFLYRGAGLSPDWTTGNVIEEQVAAIRAQVGDRRAICGLSGGVDSAVAAALVQKAIGSQLTCVYVDHGLMRKGETEQVEKDFVAATGVQLKVVDASERFLGALAGVSDPEQKRKIIGREFIRVFEQAQLEIMREDGPEVAFLVQGTLYPDVVESGGGTGTANIKSHHNVGGLPDDIEFELVEPLRQLFKDEVRMVGQELGLPDEIVQRQPFPGPGLGIRIVGEVTKERLDLLREADAIAREELTAAGLDRDIWQCPVVLLADVRSVGVQGDGRTYGHPIVLRPVSSEDAMTADWSRLPYEVLSKISTRITNEVTDVNRVVLDVTSKPPGTIEWE</sequence>
<organism>
    <name type="scientific">Streptomyces coelicolor (strain ATCC BAA-471 / A3(2) / M145)</name>
    <dbReference type="NCBI Taxonomy" id="100226"/>
    <lineage>
        <taxon>Bacteria</taxon>
        <taxon>Bacillati</taxon>
        <taxon>Actinomycetota</taxon>
        <taxon>Actinomycetes</taxon>
        <taxon>Kitasatosporales</taxon>
        <taxon>Streptomycetaceae</taxon>
        <taxon>Streptomyces</taxon>
        <taxon>Streptomyces albidoflavus group</taxon>
    </lineage>
</organism>
<reference key="1">
    <citation type="journal article" date="2002" name="Nature">
        <title>Complete genome sequence of the model actinomycete Streptomyces coelicolor A3(2).</title>
        <authorList>
            <person name="Bentley S.D."/>
            <person name="Chater K.F."/>
            <person name="Cerdeno-Tarraga A.-M."/>
            <person name="Challis G.L."/>
            <person name="Thomson N.R."/>
            <person name="James K.D."/>
            <person name="Harris D.E."/>
            <person name="Quail M.A."/>
            <person name="Kieser H."/>
            <person name="Harper D."/>
            <person name="Bateman A."/>
            <person name="Brown S."/>
            <person name="Chandra G."/>
            <person name="Chen C.W."/>
            <person name="Collins M."/>
            <person name="Cronin A."/>
            <person name="Fraser A."/>
            <person name="Goble A."/>
            <person name="Hidalgo J."/>
            <person name="Hornsby T."/>
            <person name="Howarth S."/>
            <person name="Huang C.-H."/>
            <person name="Kieser T."/>
            <person name="Larke L."/>
            <person name="Murphy L.D."/>
            <person name="Oliver K."/>
            <person name="O'Neil S."/>
            <person name="Rabbinowitsch E."/>
            <person name="Rajandream M.A."/>
            <person name="Rutherford K.M."/>
            <person name="Rutter S."/>
            <person name="Seeger K."/>
            <person name="Saunders D."/>
            <person name="Sharp S."/>
            <person name="Squares R."/>
            <person name="Squares S."/>
            <person name="Taylor K."/>
            <person name="Warren T."/>
            <person name="Wietzorrek A."/>
            <person name="Woodward J.R."/>
            <person name="Barrell B.G."/>
            <person name="Parkhill J."/>
            <person name="Hopwood D.A."/>
        </authorList>
    </citation>
    <scope>NUCLEOTIDE SEQUENCE [LARGE SCALE GENOMIC DNA]</scope>
    <source>
        <strain>ATCC BAA-471 / A3(2) / M145</strain>
    </source>
</reference>
<name>GUAA_STRCO</name>
<comment type="function">
    <text evidence="1">Catalyzes the synthesis of GMP from XMP.</text>
</comment>
<comment type="catalytic activity">
    <reaction>
        <text>XMP + L-glutamine + ATP + H2O = GMP + L-glutamate + AMP + diphosphate + 2 H(+)</text>
        <dbReference type="Rhea" id="RHEA:11680"/>
        <dbReference type="ChEBI" id="CHEBI:15377"/>
        <dbReference type="ChEBI" id="CHEBI:15378"/>
        <dbReference type="ChEBI" id="CHEBI:29985"/>
        <dbReference type="ChEBI" id="CHEBI:30616"/>
        <dbReference type="ChEBI" id="CHEBI:33019"/>
        <dbReference type="ChEBI" id="CHEBI:57464"/>
        <dbReference type="ChEBI" id="CHEBI:58115"/>
        <dbReference type="ChEBI" id="CHEBI:58359"/>
        <dbReference type="ChEBI" id="CHEBI:456215"/>
        <dbReference type="EC" id="6.3.5.2"/>
    </reaction>
</comment>
<comment type="pathway">
    <text>Purine metabolism; GMP biosynthesis; GMP from XMP (L-Gln route): step 1/1.</text>
</comment>
<comment type="subunit">
    <text evidence="1">Homodimer.</text>
</comment>
<keyword id="KW-0067">ATP-binding</keyword>
<keyword id="KW-0315">Glutamine amidotransferase</keyword>
<keyword id="KW-0332">GMP biosynthesis</keyword>
<keyword id="KW-0436">Ligase</keyword>
<keyword id="KW-0547">Nucleotide-binding</keyword>
<keyword id="KW-0658">Purine biosynthesis</keyword>
<keyword id="KW-1185">Reference proteome</keyword>
<accession>Q9L0H2</accession>
<proteinExistence type="inferred from homology"/>
<dbReference type="EC" id="6.3.5.2"/>
<dbReference type="EMBL" id="AL939121">
    <property type="protein sequence ID" value="CAB82024.1"/>
    <property type="molecule type" value="Genomic_DNA"/>
</dbReference>
<dbReference type="RefSeq" id="NP_628943.1">
    <property type="nucleotide sequence ID" value="NC_003888.3"/>
</dbReference>
<dbReference type="RefSeq" id="WP_003974187.1">
    <property type="nucleotide sequence ID" value="NZ_VNID01000016.1"/>
</dbReference>
<dbReference type="SMR" id="Q9L0H2"/>
<dbReference type="FunCoup" id="Q9L0H2">
    <property type="interactions" value="485"/>
</dbReference>
<dbReference type="STRING" id="100226.gene:17762434"/>
<dbReference type="MEROPS" id="C26.A07"/>
<dbReference type="PaxDb" id="100226-SCO4785"/>
<dbReference type="GeneID" id="91384254"/>
<dbReference type="KEGG" id="sco:SCO4785"/>
<dbReference type="PATRIC" id="fig|100226.15.peg.4859"/>
<dbReference type="eggNOG" id="COG0518">
    <property type="taxonomic scope" value="Bacteria"/>
</dbReference>
<dbReference type="eggNOG" id="COG0519">
    <property type="taxonomic scope" value="Bacteria"/>
</dbReference>
<dbReference type="HOGENOM" id="CLU_014340_0_5_11"/>
<dbReference type="InParanoid" id="Q9L0H2"/>
<dbReference type="OrthoDB" id="9802219at2"/>
<dbReference type="PhylomeDB" id="Q9L0H2"/>
<dbReference type="UniPathway" id="UPA00189">
    <property type="reaction ID" value="UER00296"/>
</dbReference>
<dbReference type="Proteomes" id="UP000001973">
    <property type="component" value="Chromosome"/>
</dbReference>
<dbReference type="GO" id="GO:0005829">
    <property type="term" value="C:cytosol"/>
    <property type="evidence" value="ECO:0000318"/>
    <property type="project" value="GO_Central"/>
</dbReference>
<dbReference type="GO" id="GO:0005524">
    <property type="term" value="F:ATP binding"/>
    <property type="evidence" value="ECO:0007669"/>
    <property type="project" value="UniProtKB-UniRule"/>
</dbReference>
<dbReference type="GO" id="GO:0003921">
    <property type="term" value="F:GMP synthase activity"/>
    <property type="evidence" value="ECO:0000318"/>
    <property type="project" value="GO_Central"/>
</dbReference>
<dbReference type="GO" id="GO:0006177">
    <property type="term" value="P:GMP biosynthetic process"/>
    <property type="evidence" value="ECO:0000318"/>
    <property type="project" value="GO_Central"/>
</dbReference>
<dbReference type="CDD" id="cd01742">
    <property type="entry name" value="GATase1_GMP_Synthase"/>
    <property type="match status" value="1"/>
</dbReference>
<dbReference type="CDD" id="cd01997">
    <property type="entry name" value="GMP_synthase_C"/>
    <property type="match status" value="1"/>
</dbReference>
<dbReference type="FunFam" id="3.30.300.10:FF:000002">
    <property type="entry name" value="GMP synthase [glutamine-hydrolyzing]"/>
    <property type="match status" value="1"/>
</dbReference>
<dbReference type="FunFam" id="3.40.50.620:FF:000001">
    <property type="entry name" value="GMP synthase [glutamine-hydrolyzing]"/>
    <property type="match status" value="1"/>
</dbReference>
<dbReference type="FunFam" id="3.40.50.880:FF:000001">
    <property type="entry name" value="GMP synthase [glutamine-hydrolyzing]"/>
    <property type="match status" value="1"/>
</dbReference>
<dbReference type="Gene3D" id="3.30.300.10">
    <property type="match status" value="1"/>
</dbReference>
<dbReference type="Gene3D" id="3.40.50.880">
    <property type="match status" value="1"/>
</dbReference>
<dbReference type="Gene3D" id="3.40.50.620">
    <property type="entry name" value="HUPs"/>
    <property type="match status" value="1"/>
</dbReference>
<dbReference type="HAMAP" id="MF_00344">
    <property type="entry name" value="GMP_synthase"/>
    <property type="match status" value="1"/>
</dbReference>
<dbReference type="InterPro" id="IPR029062">
    <property type="entry name" value="Class_I_gatase-like"/>
</dbReference>
<dbReference type="InterPro" id="IPR017926">
    <property type="entry name" value="GATASE"/>
</dbReference>
<dbReference type="InterPro" id="IPR001674">
    <property type="entry name" value="GMP_synth_C"/>
</dbReference>
<dbReference type="InterPro" id="IPR004739">
    <property type="entry name" value="GMP_synth_GATase"/>
</dbReference>
<dbReference type="InterPro" id="IPR022955">
    <property type="entry name" value="GMP_synthase"/>
</dbReference>
<dbReference type="InterPro" id="IPR025777">
    <property type="entry name" value="GMPS_ATP_PPase_dom"/>
</dbReference>
<dbReference type="InterPro" id="IPR022310">
    <property type="entry name" value="NAD/GMP_synthase"/>
</dbReference>
<dbReference type="InterPro" id="IPR014729">
    <property type="entry name" value="Rossmann-like_a/b/a_fold"/>
</dbReference>
<dbReference type="NCBIfam" id="TIGR00884">
    <property type="entry name" value="guaA_Cterm"/>
    <property type="match status" value="1"/>
</dbReference>
<dbReference type="NCBIfam" id="TIGR00888">
    <property type="entry name" value="guaA_Nterm"/>
    <property type="match status" value="1"/>
</dbReference>
<dbReference type="NCBIfam" id="NF000848">
    <property type="entry name" value="PRK00074.1"/>
    <property type="match status" value="1"/>
</dbReference>
<dbReference type="PANTHER" id="PTHR11922:SF2">
    <property type="entry name" value="GMP SYNTHASE [GLUTAMINE-HYDROLYZING]"/>
    <property type="match status" value="1"/>
</dbReference>
<dbReference type="PANTHER" id="PTHR11922">
    <property type="entry name" value="GMP SYNTHASE-RELATED"/>
    <property type="match status" value="1"/>
</dbReference>
<dbReference type="Pfam" id="PF00117">
    <property type="entry name" value="GATase"/>
    <property type="match status" value="1"/>
</dbReference>
<dbReference type="Pfam" id="PF00958">
    <property type="entry name" value="GMP_synt_C"/>
    <property type="match status" value="1"/>
</dbReference>
<dbReference type="Pfam" id="PF02540">
    <property type="entry name" value="NAD_synthase"/>
    <property type="match status" value="1"/>
</dbReference>
<dbReference type="PRINTS" id="PR00097">
    <property type="entry name" value="ANTSNTHASEII"/>
</dbReference>
<dbReference type="PRINTS" id="PR00099">
    <property type="entry name" value="CPSGATASE"/>
</dbReference>
<dbReference type="PRINTS" id="PR00096">
    <property type="entry name" value="GATASE"/>
</dbReference>
<dbReference type="SUPFAM" id="SSF52402">
    <property type="entry name" value="Adenine nucleotide alpha hydrolases-like"/>
    <property type="match status" value="1"/>
</dbReference>
<dbReference type="SUPFAM" id="SSF52317">
    <property type="entry name" value="Class I glutamine amidotransferase-like"/>
    <property type="match status" value="1"/>
</dbReference>
<dbReference type="SUPFAM" id="SSF54810">
    <property type="entry name" value="GMP synthetase C-terminal dimerisation domain"/>
    <property type="match status" value="1"/>
</dbReference>
<dbReference type="PROSITE" id="PS51273">
    <property type="entry name" value="GATASE_TYPE_1"/>
    <property type="match status" value="1"/>
</dbReference>
<dbReference type="PROSITE" id="PS51553">
    <property type="entry name" value="GMPS_ATP_PPASE"/>
    <property type="match status" value="1"/>
</dbReference>
<evidence type="ECO:0000250" key="1"/>
<protein>
    <recommendedName>
        <fullName>GMP synthase [glutamine-hydrolyzing]</fullName>
        <ecNumber>6.3.5.2</ecNumber>
    </recommendedName>
    <alternativeName>
        <fullName>GMP synthetase</fullName>
    </alternativeName>
    <alternativeName>
        <fullName>Glutamine amidotransferase</fullName>
    </alternativeName>
</protein>
<gene>
    <name type="primary">guaA</name>
    <name type="ordered locus">SCO4785</name>
    <name type="ORF">SCD63.17</name>
</gene>